<protein>
    <recommendedName>
        <fullName>DNA topoisomerase 1</fullName>
        <ecNumber evidence="3">5.6.2.1</ecNumber>
    </recommendedName>
    <alternativeName>
        <fullName>DNA topoisomerase I</fullName>
    </alternativeName>
</protein>
<evidence type="ECO:0000250" key="1"/>
<evidence type="ECO:0000255" key="2">
    <source>
        <dbReference type="PROSITE-ProRule" id="PRU01382"/>
    </source>
</evidence>
<evidence type="ECO:0000255" key="3">
    <source>
        <dbReference type="PROSITE-ProRule" id="PRU10130"/>
    </source>
</evidence>
<evidence type="ECO:0000256" key="4">
    <source>
        <dbReference type="SAM" id="MobiDB-lite"/>
    </source>
</evidence>
<evidence type="ECO:0000305" key="5"/>
<keyword id="KW-0238">DNA-binding</keyword>
<keyword id="KW-0413">Isomerase</keyword>
<keyword id="KW-1185">Reference proteome</keyword>
<keyword id="KW-0799">Topoisomerase</keyword>
<comment type="function">
    <text evidence="1">Releases the supercoiling and torsional tension of DNA introduced during the DNA replication and transcription by transiently cleaving and rejoining one strand of the DNA duplex. Introduces a single-strand break via transesterification at a target site in duplex DNA. The scissile phosphodiester is attacked by the catalytic tyrosine of the enzyme, resulting in the formation of a DNA-(3'-phosphotyrosyl)-enzyme intermediate and the expulsion of a 5'-OH DNA strand. The free DNA strand then rotates around the intact phosphodiester bond on the opposing strand, thus removing DNA supercoils. Finally, in the religation step, the DNA 5'-OH attacks the covalent intermediate to expel the active-site tyrosine and restore the DNA phosphodiester backbone (By similarity).</text>
</comment>
<comment type="catalytic activity">
    <reaction evidence="3">
        <text>ATP-independent breakage of single-stranded DNA, followed by passage and rejoining.</text>
        <dbReference type="EC" id="5.6.2.1"/>
    </reaction>
</comment>
<comment type="subunit">
    <text>Monomer.</text>
</comment>
<comment type="miscellaneous">
    <text>Eukaryotic topoisomerase I and II can relax both negative and positive supercoils, whereas prokaryotic enzymes relax only negative supercoils.</text>
</comment>
<comment type="similarity">
    <text evidence="5">Belongs to the type IB topoisomerase family.</text>
</comment>
<sequence length="1019" mass="115545">MNSIQVKNEPMLASFASTSTNGKAKRSAKPSLFSGSEVSSDDDEEKPLAKRPKVEDSDSDAPLTSTVSSQNGVQKRSGSSNNDDNDDDSDSDSDAPLTALVKKSNGSDDDEDDDDDDDEGDDDDEEDDDDDDDDDDKPLSKSSKSNRKPPKTMSITGSGEKKWDVLIHKGPRFPDPYQPLPKDVKLKYDGRPVDLPWQTEEIAMFYAVKLETQHAQNAIFNRNFFDDFKTDLKKYPPRDGTQIKSFDKLDFRDMYNYWRSLKDAELERKKALAPSARKREIEERKAEETKWKICLVDGVEQRVGNVNVEPPGLFLGRGAHPKAGKVKRRISPGDITINHSADHPAPQPPAGMGDWAEVVEKKDVTWLAYWKENINGQYKYVFLDATSNFKTNSDREKFEKARKLDTVVKQIRRDVNKNLKSKVRHERQIATIVWLIDNFSLRAGNEKGEDEAETYGVCSLRCEHAQIKMPDTIHLEFLGKDSMKFEEDLKITNPDVFKNIAMFLKSNGMKDKSGNYVRKKPSDPIFCAPESGSGKMQPLQPNSVNQFLSKYMKGLSAKVFRTYNASVTFQGLLEQTEEWLKSRPNAAEREINQTNLRLAYNEANRQVAILCNHQKTVNPMLLNRNLERTQDKIFQIRYEIMKEQQKILTFHKVSELKKEFKVKEHPFMKQFDKIMQKQDLDAEKVKQYEEQMISDKKSKLESTFKRQQSELQYQLEQKGLTGDDGTPKKGKKAKNVEEEVRSSIKGFKDKKQVDEELKALNETAKRLEKERKTNKSQATSCNFVSSAKKILSKYEMIKKQEAELVNKNNTSDVALSTSKLNYIDPRITLAWLKEWDDRLSDLGQGKAAPKKKVKKEEEENDIKPKKKDAKGAASKKRAAKTGLANSTGDSEKMELGLQVMNISQFFANALQKKFKWAASGDDGRDISAKWVFVKDAQSKMRKLDSAERKGQKGGSMAAMTDAADSKEAQPKVNCVLKKQTSADRKMSKPIKAVDKTEESDDDLSSDSSDDEDKPLAAVV</sequence>
<reference key="1">
    <citation type="journal article" date="1994" name="Nucleic Acids Res.">
        <title>The topoisomerase I gene from Ustilago maydis: sequence, disruption and mutant phenotype.</title>
        <authorList>
            <person name="Gerhold D."/>
            <person name="Thiyagarajan M."/>
            <person name="Kmiec E.B."/>
        </authorList>
    </citation>
    <scope>NUCLEOTIDE SEQUENCE [GENOMIC DNA]</scope>
    <source>
        <strain>ATCC 90884 / UCM005</strain>
    </source>
</reference>
<reference key="2">
    <citation type="journal article" date="2006" name="Nature">
        <title>Insights from the genome of the biotrophic fungal plant pathogen Ustilago maydis.</title>
        <authorList>
            <person name="Kaemper J."/>
            <person name="Kahmann R."/>
            <person name="Boelker M."/>
            <person name="Ma L.-J."/>
            <person name="Brefort T."/>
            <person name="Saville B.J."/>
            <person name="Banuett F."/>
            <person name="Kronstad J.W."/>
            <person name="Gold S.E."/>
            <person name="Mueller O."/>
            <person name="Perlin M.H."/>
            <person name="Woesten H.A.B."/>
            <person name="de Vries R."/>
            <person name="Ruiz-Herrera J."/>
            <person name="Reynaga-Pena C.G."/>
            <person name="Snetselaar K."/>
            <person name="McCann M."/>
            <person name="Perez-Martin J."/>
            <person name="Feldbruegge M."/>
            <person name="Basse C.W."/>
            <person name="Steinberg G."/>
            <person name="Ibeas J.I."/>
            <person name="Holloman W."/>
            <person name="Guzman P."/>
            <person name="Farman M.L."/>
            <person name="Stajich J.E."/>
            <person name="Sentandreu R."/>
            <person name="Gonzalez-Prieto J.M."/>
            <person name="Kennell J.C."/>
            <person name="Molina L."/>
            <person name="Schirawski J."/>
            <person name="Mendoza-Mendoza A."/>
            <person name="Greilinger D."/>
            <person name="Muench K."/>
            <person name="Roessel N."/>
            <person name="Scherer M."/>
            <person name="Vranes M."/>
            <person name="Ladendorf O."/>
            <person name="Vincon V."/>
            <person name="Fuchs U."/>
            <person name="Sandrock B."/>
            <person name="Meng S."/>
            <person name="Ho E.C.H."/>
            <person name="Cahill M.J."/>
            <person name="Boyce K.J."/>
            <person name="Klose J."/>
            <person name="Klosterman S.J."/>
            <person name="Deelstra H.J."/>
            <person name="Ortiz-Castellanos L."/>
            <person name="Li W."/>
            <person name="Sanchez-Alonso P."/>
            <person name="Schreier P.H."/>
            <person name="Haeuser-Hahn I."/>
            <person name="Vaupel M."/>
            <person name="Koopmann E."/>
            <person name="Friedrich G."/>
            <person name="Voss H."/>
            <person name="Schlueter T."/>
            <person name="Margolis J."/>
            <person name="Platt D."/>
            <person name="Swimmer C."/>
            <person name="Gnirke A."/>
            <person name="Chen F."/>
            <person name="Vysotskaia V."/>
            <person name="Mannhaupt G."/>
            <person name="Gueldener U."/>
            <person name="Muensterkoetter M."/>
            <person name="Haase D."/>
            <person name="Oesterheld M."/>
            <person name="Mewes H.-W."/>
            <person name="Mauceli E.W."/>
            <person name="DeCaprio D."/>
            <person name="Wade C.M."/>
            <person name="Butler J."/>
            <person name="Young S.K."/>
            <person name="Jaffe D.B."/>
            <person name="Calvo S.E."/>
            <person name="Nusbaum C."/>
            <person name="Galagan J.E."/>
            <person name="Birren B.W."/>
        </authorList>
    </citation>
    <scope>NUCLEOTIDE SEQUENCE [LARGE SCALE GENOMIC DNA]</scope>
    <source>
        <strain>DSM 14603 / FGSC 9021 / UM521</strain>
    </source>
</reference>
<reference key="3">
    <citation type="submission" date="2014-09" db="EMBL/GenBank/DDBJ databases">
        <authorList>
            <person name="Gueldener U."/>
            <person name="Muensterkoetter M."/>
            <person name="Walter M.C."/>
            <person name="Mannhaupt G."/>
            <person name="Kahmann R."/>
        </authorList>
    </citation>
    <scope>GENOME REANNOTATION</scope>
    <source>
        <strain>DSM 14603 / FGSC 9021 / UM521</strain>
    </source>
</reference>
<proteinExistence type="inferred from homology"/>
<accession>P41511</accession>
<accession>A0A0D1C9J7</accession>
<accession>Q4P462</accession>
<name>TOP1_MYCMD</name>
<organism>
    <name type="scientific">Mycosarcoma maydis</name>
    <name type="common">Corn smut fungus</name>
    <name type="synonym">Ustilago maydis</name>
    <dbReference type="NCBI Taxonomy" id="5270"/>
    <lineage>
        <taxon>Eukaryota</taxon>
        <taxon>Fungi</taxon>
        <taxon>Dikarya</taxon>
        <taxon>Basidiomycota</taxon>
        <taxon>Ustilaginomycotina</taxon>
        <taxon>Ustilaginomycetes</taxon>
        <taxon>Ustilaginales</taxon>
        <taxon>Ustilaginaceae</taxon>
        <taxon>Mycosarcoma</taxon>
    </lineage>
</organism>
<gene>
    <name type="primary">TOP1</name>
    <name type="ORF">UMAG_05101</name>
</gene>
<feature type="chain" id="PRO_0000145210" description="DNA topoisomerase 1">
    <location>
        <begin position="1"/>
        <end position="1019"/>
    </location>
</feature>
<feature type="domain" description="Topo IB-type catalytic" evidence="2">
    <location>
        <begin position="386"/>
        <end position="860"/>
    </location>
</feature>
<feature type="region of interest" description="Disordered" evidence="4">
    <location>
        <begin position="1"/>
        <end position="160"/>
    </location>
</feature>
<feature type="region of interest" description="Interaction with DNA" evidence="1">
    <location>
        <begin position="379"/>
        <end position="380"/>
    </location>
</feature>
<feature type="region of interest" description="Interaction with DNA" evidence="1">
    <location>
        <begin position="442"/>
        <end position="447"/>
    </location>
</feature>
<feature type="region of interest" description="Interaction with DNA" evidence="1">
    <location>
        <begin position="556"/>
        <end position="558"/>
    </location>
</feature>
<feature type="region of interest" description="Disordered" evidence="4">
    <location>
        <begin position="716"/>
        <end position="737"/>
    </location>
</feature>
<feature type="region of interest" description="Disordered" evidence="4">
    <location>
        <begin position="843"/>
        <end position="890"/>
    </location>
</feature>
<feature type="region of interest" description="Disordered" evidence="4">
    <location>
        <begin position="940"/>
        <end position="1019"/>
    </location>
</feature>
<feature type="compositionally biased region" description="Basic and acidic residues" evidence="4">
    <location>
        <begin position="46"/>
        <end position="56"/>
    </location>
</feature>
<feature type="compositionally biased region" description="Polar residues" evidence="4">
    <location>
        <begin position="62"/>
        <end position="78"/>
    </location>
</feature>
<feature type="compositionally biased region" description="Acidic residues" evidence="4">
    <location>
        <begin position="83"/>
        <end position="93"/>
    </location>
</feature>
<feature type="compositionally biased region" description="Acidic residues" evidence="4">
    <location>
        <begin position="107"/>
        <end position="136"/>
    </location>
</feature>
<feature type="compositionally biased region" description="Basic and acidic residues" evidence="4">
    <location>
        <begin position="854"/>
        <end position="863"/>
    </location>
</feature>
<feature type="compositionally biased region" description="Basic residues" evidence="4">
    <location>
        <begin position="864"/>
        <end position="879"/>
    </location>
</feature>
<feature type="compositionally biased region" description="Basic and acidic residues" evidence="4">
    <location>
        <begin position="940"/>
        <end position="950"/>
    </location>
</feature>
<feature type="compositionally biased region" description="Basic and acidic residues" evidence="4">
    <location>
        <begin position="980"/>
        <end position="996"/>
    </location>
</feature>
<feature type="compositionally biased region" description="Acidic residues" evidence="4">
    <location>
        <begin position="997"/>
        <end position="1012"/>
    </location>
</feature>
<feature type="active site" description="O-(3'-phospho-DNA)-tyrosine intermediate" evidence="2 3">
    <location>
        <position position="822"/>
    </location>
</feature>
<feature type="site" description="Interaction with DNA" evidence="1">
    <location>
        <position position="317"/>
    </location>
</feature>
<feature type="site" description="Interaction with DNA" evidence="1">
    <location>
        <position position="366"/>
    </location>
</feature>
<feature type="site" description="Interaction with DNA" evidence="1">
    <location>
        <position position="397"/>
    </location>
</feature>
<feature type="site" description="Interaction with DNA" evidence="1">
    <location>
        <position position="454"/>
    </location>
</feature>
<feature type="site" description="Interaction with DNA" evidence="1">
    <location>
        <position position="480"/>
    </location>
</feature>
<feature type="site" description="Interaction with DNA" evidence="1">
    <location>
        <position position="545"/>
    </location>
</feature>
<feature type="site" description="Interaction with DNA" evidence="1">
    <location>
        <position position="613"/>
    </location>
</feature>
<feature type="site" description="Interaction with DNA" evidence="1">
    <location>
        <position position="632"/>
    </location>
</feature>
<feature type="sequence conflict" description="In Ref. 1; AAC37415." evidence="5" ref="1">
    <original>P</original>
    <variation>A</variation>
    <location>
        <position position="181"/>
    </location>
</feature>
<feature type="sequence conflict" description="In Ref. 1; AAC37415." evidence="5" ref="1">
    <original>W</original>
    <variation>C</variation>
    <location>
        <position position="197"/>
    </location>
</feature>
<feature type="sequence conflict" description="In Ref. 1; AAC37415." evidence="5" ref="1">
    <original>A</original>
    <variation>G</variation>
    <location>
        <position position="341"/>
    </location>
</feature>
<feature type="sequence conflict" description="In Ref. 1; AAC37415." evidence="5" ref="1">
    <original>W</original>
    <variation>C</variation>
    <location>
        <position position="434"/>
    </location>
</feature>
<feature type="sequence conflict" description="In Ref. 1; AAC37415." evidence="5" ref="1">
    <original>A</original>
    <variation>T</variation>
    <location>
        <position position="452"/>
    </location>
</feature>
<feature type="sequence conflict" description="In Ref. 1; AAC37415." evidence="5" ref="1">
    <original>E</original>
    <variation>G</variation>
    <location>
        <position position="1011"/>
    </location>
</feature>
<feature type="sequence conflict" description="In Ref. 1; AAC37415." evidence="5" ref="1">
    <original>A</original>
    <variation>S</variation>
    <location>
        <position position="1017"/>
    </location>
</feature>
<dbReference type="EC" id="5.6.2.1" evidence="3"/>
<dbReference type="EMBL" id="L32017">
    <property type="protein sequence ID" value="AAC37415.1"/>
    <property type="molecule type" value="Genomic_DNA"/>
</dbReference>
<dbReference type="EMBL" id="CM003143">
    <property type="protein sequence ID" value="KIS70027.1"/>
    <property type="molecule type" value="Genomic_DNA"/>
</dbReference>
<dbReference type="PIR" id="S53694">
    <property type="entry name" value="S53694"/>
</dbReference>
<dbReference type="RefSeq" id="XP_011388171.1">
    <property type="nucleotide sequence ID" value="XM_011389869.1"/>
</dbReference>
<dbReference type="SMR" id="P41511"/>
<dbReference type="FunCoup" id="P41511">
    <property type="interactions" value="281"/>
</dbReference>
<dbReference type="STRING" id="237631.P41511"/>
<dbReference type="EnsemblFungi" id="KIS70027">
    <property type="protein sequence ID" value="KIS70027"/>
    <property type="gene ID" value="UMAG_05101"/>
</dbReference>
<dbReference type="GeneID" id="23565081"/>
<dbReference type="KEGG" id="uma:UMAG_05101"/>
<dbReference type="VEuPathDB" id="FungiDB:UMAG_05101"/>
<dbReference type="eggNOG" id="KOG0981">
    <property type="taxonomic scope" value="Eukaryota"/>
</dbReference>
<dbReference type="HOGENOM" id="CLU_009193_1_0_1"/>
<dbReference type="InParanoid" id="P41511"/>
<dbReference type="OMA" id="RCEHAQI"/>
<dbReference type="OrthoDB" id="47179at2759"/>
<dbReference type="Proteomes" id="UP000000561">
    <property type="component" value="Chromosome 4"/>
</dbReference>
<dbReference type="GO" id="GO:0005694">
    <property type="term" value="C:chromosome"/>
    <property type="evidence" value="ECO:0007669"/>
    <property type="project" value="InterPro"/>
</dbReference>
<dbReference type="GO" id="GO:0005730">
    <property type="term" value="C:nucleolus"/>
    <property type="evidence" value="ECO:0000318"/>
    <property type="project" value="GO_Central"/>
</dbReference>
<dbReference type="GO" id="GO:0003677">
    <property type="term" value="F:DNA binding"/>
    <property type="evidence" value="ECO:0007669"/>
    <property type="project" value="UniProtKB-KW"/>
</dbReference>
<dbReference type="GO" id="GO:0003917">
    <property type="term" value="F:DNA topoisomerase type I (single strand cut, ATP-independent) activity"/>
    <property type="evidence" value="ECO:0000318"/>
    <property type="project" value="GO_Central"/>
</dbReference>
<dbReference type="GO" id="GO:0007059">
    <property type="term" value="P:chromosome segregation"/>
    <property type="evidence" value="ECO:0000318"/>
    <property type="project" value="GO_Central"/>
</dbReference>
<dbReference type="GO" id="GO:0006260">
    <property type="term" value="P:DNA replication"/>
    <property type="evidence" value="ECO:0000318"/>
    <property type="project" value="GO_Central"/>
</dbReference>
<dbReference type="GO" id="GO:0006265">
    <property type="term" value="P:DNA topological change"/>
    <property type="evidence" value="ECO:0000318"/>
    <property type="project" value="GO_Central"/>
</dbReference>
<dbReference type="CDD" id="cd00659">
    <property type="entry name" value="Topo_IB_C"/>
    <property type="match status" value="1"/>
</dbReference>
<dbReference type="CDD" id="cd03488">
    <property type="entry name" value="Topoisomer_IB_N_htopoI_like"/>
    <property type="match status" value="1"/>
</dbReference>
<dbReference type="FunFam" id="1.10.10.41:FF:000004">
    <property type="entry name" value="DNA topoisomerase I"/>
    <property type="match status" value="1"/>
</dbReference>
<dbReference type="FunFam" id="3.90.15.10:FF:000008">
    <property type="entry name" value="DNA topoisomerase I"/>
    <property type="match status" value="1"/>
</dbReference>
<dbReference type="Gene3D" id="1.10.132.10">
    <property type="match status" value="1"/>
</dbReference>
<dbReference type="Gene3D" id="2.170.11.10">
    <property type="entry name" value="DNA Topoisomerase I, domain 2"/>
    <property type="match status" value="1"/>
</dbReference>
<dbReference type="Gene3D" id="3.90.15.10">
    <property type="entry name" value="Topoisomerase I, Chain A, domain 3"/>
    <property type="match status" value="1"/>
</dbReference>
<dbReference type="Gene3D" id="1.10.10.41">
    <property type="entry name" value="Yeast DNA topoisomerase - domain 1"/>
    <property type="match status" value="1"/>
</dbReference>
<dbReference type="InterPro" id="IPR011010">
    <property type="entry name" value="DNA_brk_join_enz"/>
</dbReference>
<dbReference type="InterPro" id="IPR013034">
    <property type="entry name" value="DNA_topo_DNA_db_N_dom1"/>
</dbReference>
<dbReference type="InterPro" id="IPR013030">
    <property type="entry name" value="DNA_topo_DNA_db_N_dom2"/>
</dbReference>
<dbReference type="InterPro" id="IPR001631">
    <property type="entry name" value="TopoI"/>
</dbReference>
<dbReference type="InterPro" id="IPR025834">
    <property type="entry name" value="TopoI_C_dom"/>
</dbReference>
<dbReference type="InterPro" id="IPR014711">
    <property type="entry name" value="TopoI_cat_a-hlx-sub_euk"/>
</dbReference>
<dbReference type="InterPro" id="IPR014727">
    <property type="entry name" value="TopoI_cat_a/b-sub_euk"/>
</dbReference>
<dbReference type="InterPro" id="IPR013500">
    <property type="entry name" value="TopoI_cat_euk"/>
</dbReference>
<dbReference type="InterPro" id="IPR008336">
    <property type="entry name" value="TopoI_DNA-bd_euk"/>
</dbReference>
<dbReference type="InterPro" id="IPR036202">
    <property type="entry name" value="TopoI_DNA-bd_euk_N_sf"/>
</dbReference>
<dbReference type="InterPro" id="IPR013499">
    <property type="entry name" value="TopoI_euk"/>
</dbReference>
<dbReference type="InterPro" id="IPR018521">
    <property type="entry name" value="TopoIB_AS"/>
</dbReference>
<dbReference type="InterPro" id="IPR048045">
    <property type="entry name" value="Topoisomer_I_DNA-bd"/>
</dbReference>
<dbReference type="InterPro" id="IPR051062">
    <property type="entry name" value="Topoisomerase_IB"/>
</dbReference>
<dbReference type="PANTHER" id="PTHR10290:SF3">
    <property type="entry name" value="DNA TOPOISOMERASE 1"/>
    <property type="match status" value="1"/>
</dbReference>
<dbReference type="PANTHER" id="PTHR10290">
    <property type="entry name" value="DNA TOPOISOMERASE I"/>
    <property type="match status" value="1"/>
</dbReference>
<dbReference type="Pfam" id="PF14370">
    <property type="entry name" value="Topo_C_assoc"/>
    <property type="match status" value="1"/>
</dbReference>
<dbReference type="Pfam" id="PF01028">
    <property type="entry name" value="Topoisom_I"/>
    <property type="match status" value="1"/>
</dbReference>
<dbReference type="Pfam" id="PF02919">
    <property type="entry name" value="Topoisom_I_N"/>
    <property type="match status" value="1"/>
</dbReference>
<dbReference type="PRINTS" id="PR00416">
    <property type="entry name" value="EUTPISMRASEI"/>
</dbReference>
<dbReference type="SMART" id="SM00435">
    <property type="entry name" value="TOPEUc"/>
    <property type="match status" value="1"/>
</dbReference>
<dbReference type="SUPFAM" id="SSF56349">
    <property type="entry name" value="DNA breaking-rejoining enzymes"/>
    <property type="match status" value="1"/>
</dbReference>
<dbReference type="SUPFAM" id="SSF56741">
    <property type="entry name" value="Eukaryotic DNA topoisomerase I, N-terminal DNA-binding fragment"/>
    <property type="match status" value="1"/>
</dbReference>
<dbReference type="PROSITE" id="PS00176">
    <property type="entry name" value="TOPO_IB_1"/>
    <property type="match status" value="1"/>
</dbReference>
<dbReference type="PROSITE" id="PS52038">
    <property type="entry name" value="TOPO_IB_2"/>
    <property type="match status" value="1"/>
</dbReference>